<feature type="chain" id="PRO_1000186141" description="Regulatory protein ViaA">
    <location>
        <begin position="1"/>
        <end position="483"/>
    </location>
</feature>
<protein>
    <recommendedName>
        <fullName evidence="1">Regulatory protein ViaA</fullName>
    </recommendedName>
    <alternativeName>
        <fullName evidence="1">VWA interacting with AAA+ ATPase</fullName>
    </alternativeName>
</protein>
<name>VIAA_ECO45</name>
<proteinExistence type="inferred from homology"/>
<reference key="1">
    <citation type="journal article" date="2009" name="PLoS Genet.">
        <title>Organised genome dynamics in the Escherichia coli species results in highly diverse adaptive paths.</title>
        <authorList>
            <person name="Touchon M."/>
            <person name="Hoede C."/>
            <person name="Tenaillon O."/>
            <person name="Barbe V."/>
            <person name="Baeriswyl S."/>
            <person name="Bidet P."/>
            <person name="Bingen E."/>
            <person name="Bonacorsi S."/>
            <person name="Bouchier C."/>
            <person name="Bouvet O."/>
            <person name="Calteau A."/>
            <person name="Chiapello H."/>
            <person name="Clermont O."/>
            <person name="Cruveiller S."/>
            <person name="Danchin A."/>
            <person name="Diard M."/>
            <person name="Dossat C."/>
            <person name="Karoui M.E."/>
            <person name="Frapy E."/>
            <person name="Garry L."/>
            <person name="Ghigo J.M."/>
            <person name="Gilles A.M."/>
            <person name="Johnson J."/>
            <person name="Le Bouguenec C."/>
            <person name="Lescat M."/>
            <person name="Mangenot S."/>
            <person name="Martinez-Jehanne V."/>
            <person name="Matic I."/>
            <person name="Nassif X."/>
            <person name="Oztas S."/>
            <person name="Petit M.A."/>
            <person name="Pichon C."/>
            <person name="Rouy Z."/>
            <person name="Ruf C.S."/>
            <person name="Schneider D."/>
            <person name="Tourret J."/>
            <person name="Vacherie B."/>
            <person name="Vallenet D."/>
            <person name="Medigue C."/>
            <person name="Rocha E.P.C."/>
            <person name="Denamur E."/>
        </authorList>
    </citation>
    <scope>NUCLEOTIDE SEQUENCE [LARGE SCALE GENOMIC DNA]</scope>
    <source>
        <strain>S88 / ExPEC</strain>
    </source>
</reference>
<comment type="function">
    <text evidence="1">Component of the RavA-ViaA chaperone complex, which may act on the membrane to optimize the function of some of the respiratory chains. ViaA stimulates the ATPase activity of RavA.</text>
</comment>
<comment type="subunit">
    <text evidence="1">Homodimer. Interacts with RavA.</text>
</comment>
<comment type="subcellular location">
    <subcellularLocation>
        <location evidence="1">Cytoplasm</location>
    </subcellularLocation>
</comment>
<comment type="similarity">
    <text evidence="1">Belongs to the ViaA family.</text>
</comment>
<evidence type="ECO:0000255" key="1">
    <source>
        <dbReference type="HAMAP-Rule" id="MF_01626"/>
    </source>
</evidence>
<dbReference type="EMBL" id="CU928161">
    <property type="protein sequence ID" value="CAR05373.1"/>
    <property type="molecule type" value="Genomic_DNA"/>
</dbReference>
<dbReference type="RefSeq" id="WP_000956636.1">
    <property type="nucleotide sequence ID" value="NC_011742.1"/>
</dbReference>
<dbReference type="SMR" id="B7MGG5"/>
<dbReference type="KEGG" id="ecz:ECS88_4167"/>
<dbReference type="HOGENOM" id="CLU_022130_0_0_6"/>
<dbReference type="Proteomes" id="UP000000747">
    <property type="component" value="Chromosome"/>
</dbReference>
<dbReference type="GO" id="GO:0005829">
    <property type="term" value="C:cytosol"/>
    <property type="evidence" value="ECO:0007669"/>
    <property type="project" value="TreeGrafter"/>
</dbReference>
<dbReference type="CDD" id="cd01462">
    <property type="entry name" value="VWA_YIEM_type"/>
    <property type="match status" value="1"/>
</dbReference>
<dbReference type="Gene3D" id="3.40.50.410">
    <property type="entry name" value="von Willebrand factor, type A domain"/>
    <property type="match status" value="1"/>
</dbReference>
<dbReference type="HAMAP" id="MF_01626">
    <property type="entry name" value="ViaA"/>
    <property type="match status" value="1"/>
</dbReference>
<dbReference type="InterPro" id="IPR008912">
    <property type="entry name" value="Uncharacterised_CoxE"/>
</dbReference>
<dbReference type="InterPro" id="IPR023481">
    <property type="entry name" value="Uncharacterised_ViaA"/>
</dbReference>
<dbReference type="InterPro" id="IPR002035">
    <property type="entry name" value="VWF_A"/>
</dbReference>
<dbReference type="InterPro" id="IPR036465">
    <property type="entry name" value="vWFA_dom_sf"/>
</dbReference>
<dbReference type="NCBIfam" id="NF008230">
    <property type="entry name" value="PRK10997.1"/>
    <property type="match status" value="1"/>
</dbReference>
<dbReference type="PANTHER" id="PTHR36846">
    <property type="entry name" value="PROTEIN VIAA"/>
    <property type="match status" value="1"/>
</dbReference>
<dbReference type="PANTHER" id="PTHR36846:SF1">
    <property type="entry name" value="PROTEIN VIAA"/>
    <property type="match status" value="1"/>
</dbReference>
<dbReference type="Pfam" id="PF05762">
    <property type="entry name" value="VWA_CoxE"/>
    <property type="match status" value="1"/>
</dbReference>
<dbReference type="SMART" id="SM00327">
    <property type="entry name" value="VWA"/>
    <property type="match status" value="1"/>
</dbReference>
<dbReference type="SUPFAM" id="SSF53300">
    <property type="entry name" value="vWA-like"/>
    <property type="match status" value="1"/>
</dbReference>
<gene>
    <name evidence="1" type="primary">viaA</name>
    <name type="ordered locus">ECS88_4167</name>
</gene>
<keyword id="KW-0143">Chaperone</keyword>
<keyword id="KW-0963">Cytoplasm</keyword>
<keyword id="KW-1185">Reference proteome</keyword>
<organism>
    <name type="scientific">Escherichia coli O45:K1 (strain S88 / ExPEC)</name>
    <dbReference type="NCBI Taxonomy" id="585035"/>
    <lineage>
        <taxon>Bacteria</taxon>
        <taxon>Pseudomonadati</taxon>
        <taxon>Pseudomonadota</taxon>
        <taxon>Gammaproteobacteria</taxon>
        <taxon>Enterobacterales</taxon>
        <taxon>Enterobacteriaceae</taxon>
        <taxon>Escherichia</taxon>
    </lineage>
</organism>
<accession>B7MGG5</accession>
<sequence>MLTLDTLNVMLAVSEEGLIEEMIIALLASPQLAVFFEKFPRLKAAITDDVPRWREALRSRLKDARVPPELTEEVMCYQQSQLLSTPQFIVQLPQILDLLHRLNSPWAEQARQLVDANSTITSALHTLFLQRWRLSLIVQATTLNQQLLEEEREQLLSEVQERMTLSGQLEPILADNNTAAGRLWDMSAGQLKRGDYQLIVKYGEFLNEQPELKRLAEQLGRSREAKSIPRNDAQMETFRTMVREPATVPEQVDGLQQSDDILRLLPPELATLGITELEYEFYRRLVEKQLLTYRLHGESWREKMIERPVVHKDYDEQPRGPFIVCVDTSGSMGGFNEQCAKAFCLALMRIALAENRRCYIMLFSTEIVRYELSGPQGIEQAIRFLSQQFRGGTDLASCFRAIMERLQSREWFDADAVVISDFIAQRLPDDVTSKVKELQRVHQHRFHAVAMSAHGKPGIMRIFDHIWRFDTGMRSRLLRRWRR</sequence>